<feature type="initiator methionine" description="Removed" evidence="2">
    <location>
        <position position="1"/>
    </location>
</feature>
<feature type="chain" id="PRO_0000071607" description="PAT complex subunit Asterix">
    <location>
        <begin position="2"/>
        <end position="106"/>
    </location>
</feature>
<feature type="topological domain" description="Cytoplasmic" evidence="1">
    <location>
        <begin position="2"/>
        <end position="32"/>
    </location>
</feature>
<feature type="transmembrane region" description="Helical" evidence="1">
    <location>
        <begin position="33"/>
        <end position="51"/>
    </location>
</feature>
<feature type="topological domain" description="Lumenal" evidence="1">
    <location>
        <position position="52"/>
    </location>
</feature>
<feature type="transmembrane region" description="Helical" evidence="1">
    <location>
        <begin position="53"/>
        <end position="70"/>
    </location>
</feature>
<feature type="topological domain" description="Cytoplasmic" evidence="1">
    <location>
        <begin position="71"/>
        <end position="74"/>
    </location>
</feature>
<feature type="transmembrane region" description="Helical" evidence="1">
    <location>
        <begin position="75"/>
        <end position="95"/>
    </location>
</feature>
<feature type="topological domain" description="Lumenal" evidence="1">
    <location>
        <begin position="96"/>
        <end position="106"/>
    </location>
</feature>
<feature type="region of interest" description="Disordered" evidence="3">
    <location>
        <begin position="1"/>
        <end position="29"/>
    </location>
</feature>
<feature type="compositionally biased region" description="Polar residues" evidence="3">
    <location>
        <begin position="1"/>
        <end position="10"/>
    </location>
</feature>
<feature type="modified residue" description="N-acetylserine" evidence="2">
    <location>
        <position position="2"/>
    </location>
</feature>
<accession>Q6Q7K0</accession>
<comment type="function">
    <text evidence="1 2">Component of the multi-pass translocon (MPT) complex that mediates insertion of multi-pass membrane proteins into the lipid bilayer of membranes. The MPT complex takes over after the SEC61 complex: following membrane insertion of the first few transmembrane segments of proteins by the SEC61 complex, the MPT complex occludes the lateral gate of the SEC61 complex to promote insertion of subsequent transmembrane regions (By similarity). Within the MPT complex, the PAT subcomplex sequesters any highly polar regions in the transmembrane domains away from the non-polar membrane environment until they can be buried in the interior of the fully assembled protein. Within the PAT subcomplex, WDR83OS/Asterix binds to and redirects the substrate to a location behind the SEC61 complex (By similarity).</text>
</comment>
<comment type="subunit">
    <text evidence="2">Component of the PAT complex, composed of WDR83OS/Asterix and CCDC47. The PAT complex is part of the multi-pass translocon (MPT) complex, composed of three subcomplexes, the GEL complex (composed of RAB5IF/OPTI and TMCO1), the BOS complex (composed of NCLN/Nicalin, NOMO1 and TMEM147) and the PAT complex (composed of WDR83OS/Asterix and CCDC47). The MPT complex associates with the SEC61 complex.</text>
</comment>
<comment type="subcellular location">
    <subcellularLocation>
        <location evidence="2">Endoplasmic reticulum membrane</location>
        <topology evidence="2">Multi-pass membrane protein</topology>
    </subcellularLocation>
</comment>
<comment type="developmental stage">
    <text evidence="4">Expressed during early cleavage-stage embryos before zygotic gene activation (ZGA), metaphase II (MII) oocyte, 1-cell, and 2-cell stage embryos.</text>
</comment>
<comment type="similarity">
    <text evidence="5">Belongs to the Asterix family.</text>
</comment>
<name>ASTER_PIG</name>
<reference key="1">
    <citation type="journal article" date="2005" name="Mol. Reprod. Dev.">
        <title>Identification of maternal mRNAs in porcine parthenotes at the 2-cell stage: a comparison with the blastocyst stage.</title>
        <authorList>
            <person name="Hwang K.C."/>
            <person name="Lee H.Y."/>
            <person name="Cui X.S."/>
            <person name="Kim J.H."/>
            <person name="Kim N.H."/>
        </authorList>
    </citation>
    <scope>NUCLEOTIDE SEQUENCE [MRNA]</scope>
    <scope>DEVELOPMENTAL STAGE</scope>
</reference>
<dbReference type="EMBL" id="AY553921">
    <property type="protein sequence ID" value="AAS76542.1"/>
    <property type="molecule type" value="mRNA"/>
</dbReference>
<dbReference type="RefSeq" id="NP_001001645.1">
    <property type="nucleotide sequence ID" value="NM_001001645.1"/>
</dbReference>
<dbReference type="SMR" id="Q6Q7K0"/>
<dbReference type="FunCoup" id="Q6Q7K0">
    <property type="interactions" value="2674"/>
</dbReference>
<dbReference type="STRING" id="9823.ENSSSCP00000073894"/>
<dbReference type="GlyGen" id="Q6Q7K0">
    <property type="glycosylation" value="1 site"/>
</dbReference>
<dbReference type="PaxDb" id="9823-ENSSSCP00000014591"/>
<dbReference type="GeneID" id="414435"/>
<dbReference type="KEGG" id="ssc:414435"/>
<dbReference type="CTD" id="51398"/>
<dbReference type="eggNOG" id="KOG3462">
    <property type="taxonomic scope" value="Eukaryota"/>
</dbReference>
<dbReference type="InParanoid" id="Q6Q7K0"/>
<dbReference type="OrthoDB" id="284718at2759"/>
<dbReference type="Proteomes" id="UP000008227">
    <property type="component" value="Unplaced"/>
</dbReference>
<dbReference type="Proteomes" id="UP000314985">
    <property type="component" value="Unplaced"/>
</dbReference>
<dbReference type="Proteomes" id="UP000694570">
    <property type="component" value="Unplaced"/>
</dbReference>
<dbReference type="Proteomes" id="UP000694571">
    <property type="component" value="Unplaced"/>
</dbReference>
<dbReference type="Proteomes" id="UP000694720">
    <property type="component" value="Unplaced"/>
</dbReference>
<dbReference type="Proteomes" id="UP000694722">
    <property type="component" value="Unplaced"/>
</dbReference>
<dbReference type="Proteomes" id="UP000694723">
    <property type="component" value="Unplaced"/>
</dbReference>
<dbReference type="Proteomes" id="UP000694724">
    <property type="component" value="Unplaced"/>
</dbReference>
<dbReference type="Proteomes" id="UP000694725">
    <property type="component" value="Unplaced"/>
</dbReference>
<dbReference type="Proteomes" id="UP000694726">
    <property type="component" value="Unplaced"/>
</dbReference>
<dbReference type="Proteomes" id="UP000694727">
    <property type="component" value="Unplaced"/>
</dbReference>
<dbReference type="Proteomes" id="UP000694728">
    <property type="component" value="Unplaced"/>
</dbReference>
<dbReference type="GO" id="GO:0005789">
    <property type="term" value="C:endoplasmic reticulum membrane"/>
    <property type="evidence" value="ECO:0000250"/>
    <property type="project" value="UniProtKB"/>
</dbReference>
<dbReference type="GO" id="GO:0160064">
    <property type="term" value="C:multi-pass translocon complex"/>
    <property type="evidence" value="ECO:0000250"/>
    <property type="project" value="UniProtKB"/>
</dbReference>
<dbReference type="GO" id="GO:0044183">
    <property type="term" value="F:protein folding chaperone"/>
    <property type="evidence" value="ECO:0000250"/>
    <property type="project" value="UniProtKB"/>
</dbReference>
<dbReference type="GO" id="GO:0160063">
    <property type="term" value="P:multi-pass transmembrane protein insertion into ER membrane"/>
    <property type="evidence" value="ECO:0000250"/>
    <property type="project" value="UniProtKB"/>
</dbReference>
<dbReference type="GO" id="GO:0045048">
    <property type="term" value="P:protein insertion into ER membrane"/>
    <property type="evidence" value="ECO:0000250"/>
    <property type="project" value="UniProtKB"/>
</dbReference>
<dbReference type="InterPro" id="IPR005351">
    <property type="entry name" value="ASTER"/>
</dbReference>
<dbReference type="PANTHER" id="PTHR13193">
    <property type="entry name" value="CGI-140"/>
    <property type="match status" value="1"/>
</dbReference>
<dbReference type="PANTHER" id="PTHR13193:SF0">
    <property type="entry name" value="PAT COMPLEX SUBUNIT ASTERIX"/>
    <property type="match status" value="1"/>
</dbReference>
<dbReference type="Pfam" id="PF03669">
    <property type="entry name" value="ASTER"/>
    <property type="match status" value="1"/>
</dbReference>
<keyword id="KW-0007">Acetylation</keyword>
<keyword id="KW-0143">Chaperone</keyword>
<keyword id="KW-0256">Endoplasmic reticulum</keyword>
<keyword id="KW-0472">Membrane</keyword>
<keyword id="KW-1185">Reference proteome</keyword>
<keyword id="KW-0812">Transmembrane</keyword>
<keyword id="KW-1133">Transmembrane helix</keyword>
<gene>
    <name type="primary">WDR83OS</name>
</gene>
<protein>
    <recommendedName>
        <fullName evidence="2">PAT complex subunit Asterix</fullName>
    </recommendedName>
    <alternativeName>
        <fullName>Protein WDR83OS homolog</fullName>
    </alternativeName>
    <alternativeName>
        <fullName evidence="2">Protein associated with the ER translocon of 10kDa</fullName>
        <shortName evidence="2">PAT-10</shortName>
        <shortName evidence="2">PAT10</shortName>
    </alternativeName>
</protein>
<proteinExistence type="evidence at transcript level"/>
<evidence type="ECO:0000250" key="1">
    <source>
        <dbReference type="UniProtKB" id="A0A8I3NQW8"/>
    </source>
</evidence>
<evidence type="ECO:0000250" key="2">
    <source>
        <dbReference type="UniProtKB" id="Q9Y284"/>
    </source>
</evidence>
<evidence type="ECO:0000256" key="3">
    <source>
        <dbReference type="SAM" id="MobiDB-lite"/>
    </source>
</evidence>
<evidence type="ECO:0000269" key="4">
    <source>
    </source>
</evidence>
<evidence type="ECO:0000305" key="5"/>
<sequence>MSANSMSDPRSPNKVLRYKPPPSECNPALDDPTPDYMNLLGMIFSMCGLMLKLKWCAWVAVYCSFISFANSRSSEDTKQMMSSFMLSISAVVMSYLQNPQPMTPPW</sequence>
<organism>
    <name type="scientific">Sus scrofa</name>
    <name type="common">Pig</name>
    <dbReference type="NCBI Taxonomy" id="9823"/>
    <lineage>
        <taxon>Eukaryota</taxon>
        <taxon>Metazoa</taxon>
        <taxon>Chordata</taxon>
        <taxon>Craniata</taxon>
        <taxon>Vertebrata</taxon>
        <taxon>Euteleostomi</taxon>
        <taxon>Mammalia</taxon>
        <taxon>Eutheria</taxon>
        <taxon>Laurasiatheria</taxon>
        <taxon>Artiodactyla</taxon>
        <taxon>Suina</taxon>
        <taxon>Suidae</taxon>
        <taxon>Sus</taxon>
    </lineage>
</organism>